<comment type="similarity">
    <text evidence="1">Belongs to the adenoviridae E1B 19 kDa protein family.</text>
</comment>
<evidence type="ECO:0000305" key="1"/>
<keyword id="KW-0244">Early protein</keyword>
<keyword id="KW-0945">Host-virus interaction</keyword>
<keyword id="KW-1081">Inhibition of host apoptosis by viral BCL2-like protein</keyword>
<keyword id="KW-1119">Modulation of host cell apoptosis by virus</keyword>
<dbReference type="PIR" id="D60010">
    <property type="entry name" value="D60010"/>
</dbReference>
<dbReference type="GO" id="GO:0033668">
    <property type="term" value="P:symbiont-mediated suppression of host apoptosis"/>
    <property type="evidence" value="ECO:0007669"/>
    <property type="project" value="UniProtKB-KW"/>
</dbReference>
<dbReference type="InterPro" id="IPR002924">
    <property type="entry name" value="Adenovir_t-Ag_E1B_19kDa"/>
</dbReference>
<dbReference type="InterPro" id="IPR002475">
    <property type="entry name" value="Bcl2-like"/>
</dbReference>
<dbReference type="Pfam" id="PF01691">
    <property type="entry name" value="Adeno_E1B_19K"/>
    <property type="match status" value="1"/>
</dbReference>
<dbReference type="PROSITE" id="PS50062">
    <property type="entry name" value="BCL2_FAMILY"/>
    <property type="match status" value="1"/>
</dbReference>
<reference key="1">
    <citation type="journal article" date="1989" name="Virus Res.">
        <title>Identification and nucleotide sequence of the early region 1 from canine adenovirus types 1 and 2.</title>
        <authorList>
            <person name="Spibey N."/>
            <person name="McClory R.S."/>
            <person name="Cavanagh H.M.A."/>
        </authorList>
    </citation>
    <scope>NUCLEOTIDE SEQUENCE [GENOMIC DNA]</scope>
</reference>
<protein>
    <recommendedName>
        <fullName>E1B protein, small T-antigen</fullName>
    </recommendedName>
    <alternativeName>
        <fullName>E1B 19 kDa protein</fullName>
        <shortName>E1B-19K</shortName>
    </alternativeName>
</protein>
<name>E1BS_ADEC2</name>
<organism>
    <name type="scientific">Canine adenovirus serotype 2</name>
    <name type="common">CAdV-2</name>
    <name type="synonym">Canine adenovirus 2</name>
    <dbReference type="NCBI Taxonomy" id="10514"/>
    <lineage>
        <taxon>Viruses</taxon>
        <taxon>Varidnaviria</taxon>
        <taxon>Bamfordvirae</taxon>
        <taxon>Preplasmiviricota</taxon>
        <taxon>Tectiliviricetes</taxon>
        <taxon>Rowavirales</taxon>
        <taxon>Adenoviridae</taxon>
        <taxon>Mastadenovirus</taxon>
        <taxon>Canine mastadenovirus A</taxon>
    </lineage>
</organism>
<proteinExistence type="inferred from homology"/>
<organismHost>
    <name type="scientific">Canis lupus familiaris</name>
    <name type="common">Dog</name>
    <name type="synonym">Canis familiaris</name>
    <dbReference type="NCBI Taxonomy" id="9615"/>
</organismHost>
<accession>P35983</accession>
<feature type="chain" id="PRO_0000221721" description="E1B protein, small T-antigen">
    <location>
        <begin position="1"/>
        <end position="170"/>
    </location>
</feature>
<sequence>MDPLKLENYLTFRAIIRGSTLSPGFFRRWCFPALADVVGNIVVQEEGRFWQILPENHAFWGLLRRGFTVASFTEIITAAQLENERLSRQLAFLAFISFLLRNWPSDSLVPEADRLDLVCAPAWSRMQIWTQTARLINDLQDSVLEEQGSAEEEECEEALLAGDSDDPLFG</sequence>